<sequence length="805" mass="87383">MFDITRKCVEWGDRLLVIESGKIARQADGAVVVDYGGTSVLSTVVSQKSKEPVDFLPLTVQFLAKSYAIGRIPGGFFKREGKPSDRETLISRLVDRSIRPLFPTGFCDEIVIVCNLLSYDQVSPPETVALIGAAAALAISGIPFPTPIAGAKIGYIREEERYILNPSAEELARSELDMFYSGTKSSVVMVESEASELSEEEMLGAVTFGHENCAQVLDLIEEFAEAAGPKDVVEFVPHDIGKVVSDISSGYSEKFSVAYSDHNKKTRVLQLDAAREGLYSDLCRKHVEESGEYTEQEVLLAIKTFERSLVRARVLDTLKRVDGRGFDQIRNIEIEVDLIPRSHGSALFTRGDTQALVITALGTPQDEQVVDGFDGDRRERFLLHYNFPSYAVGEAAALRPPGRREIGHGKLAWRAIHPVLPTKADFPYTIRVVSEITESDGSSSMATVCGASLALMDTGVPLKSSVAGIAMGLIKEGDRYAVLSDIIGDEDYLGDMDFKVAGTKDGITALQMDMKIRGIGFDIIEKSLQQAKDGRLFIIGKMDKVIKESREGVRDHVPRMESMIIDKNKIKNVIGTGGKNVREICEKTGVKIEISQDGTVMIYAVSRDAVEEAKNMIMCIVSEPEVGKVFSGVISEIAKYGAFVSFLGGRRGLVHISEIKNEHIGSVSDVLAVDDKVKVLVIGIDKDHVQLSMRRVDQDSGDLLEHESYSSSKKNGPQSGDASGGASGFRDYASGPARERRRSGGSGGRPVRRRSAGSSGSGSGGYYSVPQHVGTPDPVNGNDRRRGSGPQHASGGGGNKKPRFF</sequence>
<comment type="function">
    <text evidence="1">Involved in mRNA degradation. Catalyzes the phosphorolysis of single-stranded polyribonucleotides processively in the 3'- to 5'-direction.</text>
</comment>
<comment type="catalytic activity">
    <reaction evidence="1">
        <text>RNA(n+1) + phosphate = RNA(n) + a ribonucleoside 5'-diphosphate</text>
        <dbReference type="Rhea" id="RHEA:22096"/>
        <dbReference type="Rhea" id="RHEA-COMP:14527"/>
        <dbReference type="Rhea" id="RHEA-COMP:17342"/>
        <dbReference type="ChEBI" id="CHEBI:43474"/>
        <dbReference type="ChEBI" id="CHEBI:57930"/>
        <dbReference type="ChEBI" id="CHEBI:140395"/>
        <dbReference type="EC" id="2.7.7.8"/>
    </reaction>
</comment>
<comment type="cofactor">
    <cofactor evidence="1">
        <name>Mg(2+)</name>
        <dbReference type="ChEBI" id="CHEBI:18420"/>
    </cofactor>
</comment>
<comment type="subcellular location">
    <subcellularLocation>
        <location evidence="1">Cytoplasm</location>
    </subcellularLocation>
</comment>
<comment type="similarity">
    <text evidence="1">Belongs to the polyribonucleotide nucleotidyltransferase family.</text>
</comment>
<evidence type="ECO:0000255" key="1">
    <source>
        <dbReference type="HAMAP-Rule" id="MF_01595"/>
    </source>
</evidence>
<evidence type="ECO:0000256" key="2">
    <source>
        <dbReference type="SAM" id="MobiDB-lite"/>
    </source>
</evidence>
<name>PNP_ANAMM</name>
<proteinExistence type="inferred from homology"/>
<dbReference type="EC" id="2.7.7.8" evidence="1"/>
<dbReference type="EMBL" id="CP000030">
    <property type="protein sequence ID" value="AAV86550.1"/>
    <property type="molecule type" value="Genomic_DNA"/>
</dbReference>
<dbReference type="RefSeq" id="WP_011114318.1">
    <property type="nucleotide sequence ID" value="NC_004842.2"/>
</dbReference>
<dbReference type="SMR" id="Q5PAY0"/>
<dbReference type="KEGG" id="ama:AM526"/>
<dbReference type="HOGENOM" id="CLU_004217_2_2_5"/>
<dbReference type="GO" id="GO:0005829">
    <property type="term" value="C:cytosol"/>
    <property type="evidence" value="ECO:0007669"/>
    <property type="project" value="TreeGrafter"/>
</dbReference>
<dbReference type="GO" id="GO:0000175">
    <property type="term" value="F:3'-5'-RNA exonuclease activity"/>
    <property type="evidence" value="ECO:0007669"/>
    <property type="project" value="TreeGrafter"/>
</dbReference>
<dbReference type="GO" id="GO:0000287">
    <property type="term" value="F:magnesium ion binding"/>
    <property type="evidence" value="ECO:0007669"/>
    <property type="project" value="UniProtKB-UniRule"/>
</dbReference>
<dbReference type="GO" id="GO:0004654">
    <property type="term" value="F:polyribonucleotide nucleotidyltransferase activity"/>
    <property type="evidence" value="ECO:0007669"/>
    <property type="project" value="UniProtKB-UniRule"/>
</dbReference>
<dbReference type="GO" id="GO:0003723">
    <property type="term" value="F:RNA binding"/>
    <property type="evidence" value="ECO:0007669"/>
    <property type="project" value="UniProtKB-UniRule"/>
</dbReference>
<dbReference type="GO" id="GO:0006402">
    <property type="term" value="P:mRNA catabolic process"/>
    <property type="evidence" value="ECO:0007669"/>
    <property type="project" value="UniProtKB-UniRule"/>
</dbReference>
<dbReference type="GO" id="GO:0006396">
    <property type="term" value="P:RNA processing"/>
    <property type="evidence" value="ECO:0007669"/>
    <property type="project" value="InterPro"/>
</dbReference>
<dbReference type="CDD" id="cd02393">
    <property type="entry name" value="KH-I_PNPase"/>
    <property type="match status" value="1"/>
</dbReference>
<dbReference type="CDD" id="cd11364">
    <property type="entry name" value="RNase_PH_PNPase_2"/>
    <property type="match status" value="1"/>
</dbReference>
<dbReference type="FunFam" id="3.30.1370.10:FF:000001">
    <property type="entry name" value="Polyribonucleotide nucleotidyltransferase"/>
    <property type="match status" value="1"/>
</dbReference>
<dbReference type="FunFam" id="3.30.230.70:FF:000001">
    <property type="entry name" value="Polyribonucleotide nucleotidyltransferase"/>
    <property type="match status" value="1"/>
</dbReference>
<dbReference type="FunFam" id="3.30.230.70:FF:000002">
    <property type="entry name" value="Polyribonucleotide nucleotidyltransferase"/>
    <property type="match status" value="1"/>
</dbReference>
<dbReference type="Gene3D" id="3.30.230.70">
    <property type="entry name" value="GHMP Kinase, N-terminal domain"/>
    <property type="match status" value="2"/>
</dbReference>
<dbReference type="Gene3D" id="3.30.1370.10">
    <property type="entry name" value="K Homology domain, type 1"/>
    <property type="match status" value="1"/>
</dbReference>
<dbReference type="Gene3D" id="2.40.50.140">
    <property type="entry name" value="Nucleic acid-binding proteins"/>
    <property type="match status" value="1"/>
</dbReference>
<dbReference type="HAMAP" id="MF_01595">
    <property type="entry name" value="PNPase"/>
    <property type="match status" value="1"/>
</dbReference>
<dbReference type="InterPro" id="IPR001247">
    <property type="entry name" value="ExoRNase_PH_dom1"/>
</dbReference>
<dbReference type="InterPro" id="IPR015847">
    <property type="entry name" value="ExoRNase_PH_dom2"/>
</dbReference>
<dbReference type="InterPro" id="IPR036345">
    <property type="entry name" value="ExoRNase_PH_dom2_sf"/>
</dbReference>
<dbReference type="InterPro" id="IPR004087">
    <property type="entry name" value="KH_dom"/>
</dbReference>
<dbReference type="InterPro" id="IPR004088">
    <property type="entry name" value="KH_dom_type_1"/>
</dbReference>
<dbReference type="InterPro" id="IPR036612">
    <property type="entry name" value="KH_dom_type_1_sf"/>
</dbReference>
<dbReference type="InterPro" id="IPR012340">
    <property type="entry name" value="NA-bd_OB-fold"/>
</dbReference>
<dbReference type="InterPro" id="IPR012162">
    <property type="entry name" value="PNPase"/>
</dbReference>
<dbReference type="InterPro" id="IPR027408">
    <property type="entry name" value="PNPase/RNase_PH_dom_sf"/>
</dbReference>
<dbReference type="InterPro" id="IPR015848">
    <property type="entry name" value="PNPase_PH_RNA-bd_bac/org-type"/>
</dbReference>
<dbReference type="InterPro" id="IPR036456">
    <property type="entry name" value="PNPase_PH_RNA-bd_sf"/>
</dbReference>
<dbReference type="InterPro" id="IPR020568">
    <property type="entry name" value="Ribosomal_Su5_D2-typ_SF"/>
</dbReference>
<dbReference type="InterPro" id="IPR003029">
    <property type="entry name" value="S1_domain"/>
</dbReference>
<dbReference type="NCBIfam" id="TIGR03591">
    <property type="entry name" value="polynuc_phos"/>
    <property type="match status" value="1"/>
</dbReference>
<dbReference type="NCBIfam" id="NF008805">
    <property type="entry name" value="PRK11824.1"/>
    <property type="match status" value="1"/>
</dbReference>
<dbReference type="PANTHER" id="PTHR11252">
    <property type="entry name" value="POLYRIBONUCLEOTIDE NUCLEOTIDYLTRANSFERASE"/>
    <property type="match status" value="1"/>
</dbReference>
<dbReference type="PANTHER" id="PTHR11252:SF0">
    <property type="entry name" value="POLYRIBONUCLEOTIDE NUCLEOTIDYLTRANSFERASE 1, MITOCHONDRIAL"/>
    <property type="match status" value="1"/>
</dbReference>
<dbReference type="Pfam" id="PF00013">
    <property type="entry name" value="KH_1"/>
    <property type="match status" value="1"/>
</dbReference>
<dbReference type="Pfam" id="PF03726">
    <property type="entry name" value="PNPase"/>
    <property type="match status" value="1"/>
</dbReference>
<dbReference type="Pfam" id="PF01138">
    <property type="entry name" value="RNase_PH"/>
    <property type="match status" value="2"/>
</dbReference>
<dbReference type="Pfam" id="PF03725">
    <property type="entry name" value="RNase_PH_C"/>
    <property type="match status" value="1"/>
</dbReference>
<dbReference type="Pfam" id="PF00575">
    <property type="entry name" value="S1"/>
    <property type="match status" value="1"/>
</dbReference>
<dbReference type="PIRSF" id="PIRSF005499">
    <property type="entry name" value="PNPase"/>
    <property type="match status" value="1"/>
</dbReference>
<dbReference type="SMART" id="SM00322">
    <property type="entry name" value="KH"/>
    <property type="match status" value="1"/>
</dbReference>
<dbReference type="SMART" id="SM00316">
    <property type="entry name" value="S1"/>
    <property type="match status" value="1"/>
</dbReference>
<dbReference type="SUPFAM" id="SSF54791">
    <property type="entry name" value="Eukaryotic type KH-domain (KH-domain type I)"/>
    <property type="match status" value="1"/>
</dbReference>
<dbReference type="SUPFAM" id="SSF50249">
    <property type="entry name" value="Nucleic acid-binding proteins"/>
    <property type="match status" value="1"/>
</dbReference>
<dbReference type="SUPFAM" id="SSF46915">
    <property type="entry name" value="Polynucleotide phosphorylase/guanosine pentaphosphate synthase (PNPase/GPSI), domain 3"/>
    <property type="match status" value="1"/>
</dbReference>
<dbReference type="SUPFAM" id="SSF55666">
    <property type="entry name" value="Ribonuclease PH domain 2-like"/>
    <property type="match status" value="2"/>
</dbReference>
<dbReference type="SUPFAM" id="SSF54211">
    <property type="entry name" value="Ribosomal protein S5 domain 2-like"/>
    <property type="match status" value="2"/>
</dbReference>
<dbReference type="PROSITE" id="PS50084">
    <property type="entry name" value="KH_TYPE_1"/>
    <property type="match status" value="1"/>
</dbReference>
<dbReference type="PROSITE" id="PS50126">
    <property type="entry name" value="S1"/>
    <property type="match status" value="1"/>
</dbReference>
<gene>
    <name evidence="1" type="primary">pnp</name>
    <name type="ordered locus">AM526</name>
</gene>
<feature type="chain" id="PRO_0000329500" description="Polyribonucleotide nucleotidyltransferase">
    <location>
        <begin position="1"/>
        <end position="805"/>
    </location>
</feature>
<feature type="domain" description="KH" evidence="1">
    <location>
        <begin position="558"/>
        <end position="617"/>
    </location>
</feature>
<feature type="domain" description="S1 motif" evidence="1">
    <location>
        <begin position="627"/>
        <end position="694"/>
    </location>
</feature>
<feature type="region of interest" description="Disordered" evidence="2">
    <location>
        <begin position="702"/>
        <end position="805"/>
    </location>
</feature>
<feature type="compositionally biased region" description="Polar residues" evidence="2">
    <location>
        <begin position="709"/>
        <end position="721"/>
    </location>
</feature>
<feature type="binding site" evidence="1">
    <location>
        <position position="491"/>
    </location>
    <ligand>
        <name>Mg(2+)</name>
        <dbReference type="ChEBI" id="CHEBI:18420"/>
    </ligand>
</feature>
<feature type="binding site" evidence="1">
    <location>
        <position position="497"/>
    </location>
    <ligand>
        <name>Mg(2+)</name>
        <dbReference type="ChEBI" id="CHEBI:18420"/>
    </ligand>
</feature>
<organism>
    <name type="scientific">Anaplasma marginale (strain St. Maries)</name>
    <dbReference type="NCBI Taxonomy" id="234826"/>
    <lineage>
        <taxon>Bacteria</taxon>
        <taxon>Pseudomonadati</taxon>
        <taxon>Pseudomonadota</taxon>
        <taxon>Alphaproteobacteria</taxon>
        <taxon>Rickettsiales</taxon>
        <taxon>Anaplasmataceae</taxon>
        <taxon>Anaplasma</taxon>
    </lineage>
</organism>
<reference key="1">
    <citation type="journal article" date="2005" name="Proc. Natl. Acad. Sci. U.S.A.">
        <title>Complete genome sequencing of Anaplasma marginale reveals that the surface is skewed to two superfamilies of outer membrane proteins.</title>
        <authorList>
            <person name="Brayton K.A."/>
            <person name="Kappmeyer L.S."/>
            <person name="Herndon D.R."/>
            <person name="Dark M.J."/>
            <person name="Tibbals D.L."/>
            <person name="Palmer G.H."/>
            <person name="McGuire T.C."/>
            <person name="Knowles D.P. Jr."/>
        </authorList>
    </citation>
    <scope>NUCLEOTIDE SEQUENCE [LARGE SCALE GENOMIC DNA]</scope>
    <source>
        <strain>St. Maries</strain>
    </source>
</reference>
<keyword id="KW-0963">Cytoplasm</keyword>
<keyword id="KW-0460">Magnesium</keyword>
<keyword id="KW-0479">Metal-binding</keyword>
<keyword id="KW-0548">Nucleotidyltransferase</keyword>
<keyword id="KW-0694">RNA-binding</keyword>
<keyword id="KW-0808">Transferase</keyword>
<protein>
    <recommendedName>
        <fullName evidence="1">Polyribonucleotide nucleotidyltransferase</fullName>
        <ecNumber evidence="1">2.7.7.8</ecNumber>
    </recommendedName>
    <alternativeName>
        <fullName evidence="1">Polynucleotide phosphorylase</fullName>
        <shortName evidence="1">PNPase</shortName>
    </alternativeName>
</protein>
<accession>Q5PAY0</accession>